<proteinExistence type="inferred from homology"/>
<reference key="1">
    <citation type="journal article" date="2003" name="Proc. Natl. Acad. Sci. U.S.A.">
        <title>The genome sequence of Blochmannia floridanus: comparative analysis of reduced genomes.</title>
        <authorList>
            <person name="Gil R."/>
            <person name="Silva F.J."/>
            <person name="Zientz E."/>
            <person name="Delmotte F."/>
            <person name="Gonzalez-Candelas F."/>
            <person name="Latorre A."/>
            <person name="Rausell C."/>
            <person name="Kamerbeek J."/>
            <person name="Gadau J."/>
            <person name="Hoelldobler B."/>
            <person name="van Ham R.C.H.J."/>
            <person name="Gross R."/>
            <person name="Moya A."/>
        </authorList>
    </citation>
    <scope>NUCLEOTIDE SEQUENCE [LARGE SCALE GENOMIC DNA]</scope>
</reference>
<organism>
    <name type="scientific">Blochmanniella floridana</name>
    <dbReference type="NCBI Taxonomy" id="203907"/>
    <lineage>
        <taxon>Bacteria</taxon>
        <taxon>Pseudomonadati</taxon>
        <taxon>Pseudomonadota</taxon>
        <taxon>Gammaproteobacteria</taxon>
        <taxon>Enterobacterales</taxon>
        <taxon>Enterobacteriaceae</taxon>
        <taxon>ant endosymbionts</taxon>
        <taxon>Candidatus Blochmanniella</taxon>
    </lineage>
</organism>
<name>CSRA_BLOFL</name>
<evidence type="ECO:0000255" key="1">
    <source>
        <dbReference type="HAMAP-Rule" id="MF_00167"/>
    </source>
</evidence>
<sequence>MLILTRRVGETLIIGDDITVTVLGVKGNQIRIGINAPKKVSIHREEIYQRIQDEKTKQDHILDEV</sequence>
<accession>Q7VQG2</accession>
<comment type="function">
    <text evidence="1">A key translational regulator that binds mRNA to regulate translation initiation and/or mRNA stability. Mediates global changes in gene expression, shifting from rapid growth to stress survival by linking envelope stress, the stringent response and the catabolite repression systems. Usually binds in the 5'-UTR; binding at or near the Shine-Dalgarno sequence prevents ribosome-binding, repressing translation, binding elsewhere in the 5'-UTR can activate translation and/or stabilize the mRNA. Its function is antagonized by small RNA(s).</text>
</comment>
<comment type="subunit">
    <text evidence="1">Homodimer; the beta-strands of each monomer intercalate to form a hydrophobic core, while the alpha-helices form wings that extend away from the core.</text>
</comment>
<comment type="subcellular location">
    <subcellularLocation>
        <location evidence="1">Cytoplasm</location>
    </subcellularLocation>
</comment>
<comment type="similarity">
    <text evidence="1">Belongs to the CsrA/RsmA family.</text>
</comment>
<feature type="chain" id="PRO_0000177055" description="Translational regulator CsrA">
    <location>
        <begin position="1"/>
        <end position="65"/>
    </location>
</feature>
<protein>
    <recommendedName>
        <fullName evidence="1">Translational regulator CsrA</fullName>
    </recommendedName>
    <alternativeName>
        <fullName evidence="1">Carbon storage regulator</fullName>
    </alternativeName>
</protein>
<dbReference type="EMBL" id="BX248583">
    <property type="protein sequence ID" value="CAD83690.1"/>
    <property type="molecule type" value="Genomic_DNA"/>
</dbReference>
<dbReference type="SMR" id="Q7VQG2"/>
<dbReference type="STRING" id="203907.Bfl169"/>
<dbReference type="KEGG" id="bfl:Bfl169"/>
<dbReference type="eggNOG" id="COG1551">
    <property type="taxonomic scope" value="Bacteria"/>
</dbReference>
<dbReference type="HOGENOM" id="CLU_164837_2_1_6"/>
<dbReference type="OrthoDB" id="9809061at2"/>
<dbReference type="Proteomes" id="UP000002192">
    <property type="component" value="Chromosome"/>
</dbReference>
<dbReference type="GO" id="GO:0005829">
    <property type="term" value="C:cytosol"/>
    <property type="evidence" value="ECO:0007669"/>
    <property type="project" value="TreeGrafter"/>
</dbReference>
<dbReference type="GO" id="GO:0048027">
    <property type="term" value="F:mRNA 5'-UTR binding"/>
    <property type="evidence" value="ECO:0007669"/>
    <property type="project" value="UniProtKB-UniRule"/>
</dbReference>
<dbReference type="GO" id="GO:0006402">
    <property type="term" value="P:mRNA catabolic process"/>
    <property type="evidence" value="ECO:0007669"/>
    <property type="project" value="InterPro"/>
</dbReference>
<dbReference type="GO" id="GO:0045947">
    <property type="term" value="P:negative regulation of translational initiation"/>
    <property type="evidence" value="ECO:0007669"/>
    <property type="project" value="UniProtKB-UniRule"/>
</dbReference>
<dbReference type="GO" id="GO:0045948">
    <property type="term" value="P:positive regulation of translational initiation"/>
    <property type="evidence" value="ECO:0007669"/>
    <property type="project" value="UniProtKB-UniRule"/>
</dbReference>
<dbReference type="GO" id="GO:0006109">
    <property type="term" value="P:regulation of carbohydrate metabolic process"/>
    <property type="evidence" value="ECO:0007669"/>
    <property type="project" value="UniProtKB-UniRule"/>
</dbReference>
<dbReference type="FunFam" id="2.60.40.4380:FF:000001">
    <property type="entry name" value="Translational regulator CsrA"/>
    <property type="match status" value="1"/>
</dbReference>
<dbReference type="Gene3D" id="2.60.40.4380">
    <property type="entry name" value="Translational regulator CsrA"/>
    <property type="match status" value="1"/>
</dbReference>
<dbReference type="HAMAP" id="MF_00167">
    <property type="entry name" value="CsrA"/>
    <property type="match status" value="1"/>
</dbReference>
<dbReference type="InterPro" id="IPR003751">
    <property type="entry name" value="CsrA"/>
</dbReference>
<dbReference type="InterPro" id="IPR036107">
    <property type="entry name" value="CsrA_sf"/>
</dbReference>
<dbReference type="NCBIfam" id="TIGR00202">
    <property type="entry name" value="csrA"/>
    <property type="match status" value="1"/>
</dbReference>
<dbReference type="NCBIfam" id="NF002469">
    <property type="entry name" value="PRK01712.1"/>
    <property type="match status" value="1"/>
</dbReference>
<dbReference type="PANTHER" id="PTHR34984">
    <property type="entry name" value="CARBON STORAGE REGULATOR"/>
    <property type="match status" value="1"/>
</dbReference>
<dbReference type="PANTHER" id="PTHR34984:SF1">
    <property type="entry name" value="CARBON STORAGE REGULATOR"/>
    <property type="match status" value="1"/>
</dbReference>
<dbReference type="Pfam" id="PF02599">
    <property type="entry name" value="CsrA"/>
    <property type="match status" value="1"/>
</dbReference>
<dbReference type="SUPFAM" id="SSF117130">
    <property type="entry name" value="CsrA-like"/>
    <property type="match status" value="1"/>
</dbReference>
<gene>
    <name evidence="1" type="primary">csrA</name>
    <name type="ordered locus">Bfl169</name>
</gene>
<keyword id="KW-0010">Activator</keyword>
<keyword id="KW-0963">Cytoplasm</keyword>
<keyword id="KW-1185">Reference proteome</keyword>
<keyword id="KW-0678">Repressor</keyword>
<keyword id="KW-0694">RNA-binding</keyword>
<keyword id="KW-0810">Translation regulation</keyword>